<reference evidence="5" key="1">
    <citation type="journal article" date="2012" name="Mol. Ecol.">
        <title>Whole transcriptome analysis of the coral Acropora millepora reveals complex responses to CO(2)-driven acidification during the initiation of calcification.</title>
        <authorList>
            <person name="Moya A."/>
            <person name="Huisman L."/>
            <person name="Ball E.E."/>
            <person name="Hayward D.C."/>
            <person name="Grasso L.C."/>
            <person name="Chua C.M."/>
            <person name="Woo H.N."/>
            <person name="Gattuso J.P."/>
            <person name="Foret S."/>
            <person name="Miller D.J."/>
        </authorList>
    </citation>
    <scope>NUCLEOTIDE SEQUENCE [MRNA]</scope>
</reference>
<reference evidence="5" key="2">
    <citation type="journal article" date="2013" name="Mol. Biol. Evol.">
        <title>The skeletal proteome of the coral Acropora millepora: the evolution of calcification by co-option and domain shuffling.</title>
        <authorList>
            <person name="Ramos-Silva P."/>
            <person name="Kaandorp J."/>
            <person name="Huisman L."/>
            <person name="Marie B."/>
            <person name="Zanella-Cleon I."/>
            <person name="Guichard N."/>
            <person name="Miller D.J."/>
            <person name="Marin F."/>
        </authorList>
    </citation>
    <scope>PROTEIN SEQUENCE OF 40-55; 142-171; 223-297 AND 303-329</scope>
    <scope>TISSUE SPECIFICITY</scope>
    <scope>IDENTIFICATION BY MASS SPECTROMETRY</scope>
</reference>
<proteinExistence type="evidence at protein level"/>
<dbReference type="EMBL" id="JR972076">
    <property type="status" value="NOT_ANNOTATED_CDS"/>
    <property type="molecule type" value="mRNA"/>
</dbReference>
<dbReference type="OrthoDB" id="5977965at2759"/>
<dbReference type="GO" id="GO:0005576">
    <property type="term" value="C:extracellular region"/>
    <property type="evidence" value="ECO:0007669"/>
    <property type="project" value="UniProtKB-SubCell"/>
</dbReference>
<organism>
    <name type="scientific">Acropora millepora</name>
    <name type="common">Staghorn coral</name>
    <name type="synonym">Heteropora millepora</name>
    <dbReference type="NCBI Taxonomy" id="45264"/>
    <lineage>
        <taxon>Eukaryota</taxon>
        <taxon>Metazoa</taxon>
        <taxon>Cnidaria</taxon>
        <taxon>Anthozoa</taxon>
        <taxon>Hexacorallia</taxon>
        <taxon>Scleractinia</taxon>
        <taxon>Astrocoeniina</taxon>
        <taxon>Acroporidae</taxon>
        <taxon>Acropora</taxon>
    </lineage>
</organism>
<sequence>MLAPRLAFVLLLSSYFGSILITSVESSDEVDMEKKTVKMRGSNTSVLVEGDGGKISTLYFEEDDDDDDDEDNEESENEVEDFDDENALSFQVESLQEVDESGKPVKASKSSEIQHSVSSVGSLAFTVSALQNSTTYQNLSAKTVTLQAQLPNMATLELMVVLFLEDGTIKFGNETFKVLSGTMKFNINVTGWQYCDGATVSCLSDSNQPAAVGDNLDLALTVKSEAEDPEEVDDAKRAETGKDPICVDPDDPNEEDDDCPVVYDMGGNSEMVLNKGVLVNNMDYVAMPQGFPNLEKTGMMQKKLTFRLPKTPGSVIIDPSVNIGVPPKKQSGNSGTSIKASSLCFFTLTLLLSVLIAHF</sequence>
<keyword id="KW-0175">Coiled coil</keyword>
<keyword id="KW-0903">Direct protein sequencing</keyword>
<keyword id="KW-0964">Secreted</keyword>
<keyword id="KW-0732">Signal</keyword>
<comment type="subcellular location">
    <subcellularLocation>
        <location evidence="6">Secreted</location>
    </subcellularLocation>
</comment>
<comment type="tissue specificity">
    <text evidence="3">Component of the acid-insoluble and acid-soluble organic matrix of the aragonitic skeleton (at protein level).</text>
</comment>
<accession>B3EWY7</accession>
<evidence type="ECO:0000255" key="1"/>
<evidence type="ECO:0000256" key="2">
    <source>
        <dbReference type="SAM" id="MobiDB-lite"/>
    </source>
</evidence>
<evidence type="ECO:0000269" key="3">
    <source>
    </source>
</evidence>
<evidence type="ECO:0000303" key="4">
    <source>
    </source>
</evidence>
<evidence type="ECO:0000305" key="5"/>
<evidence type="ECO:0000305" key="6">
    <source>
    </source>
</evidence>
<name>ASOMP_ACRMI</name>
<feature type="signal peptide" evidence="1">
    <location>
        <begin position="1"/>
        <end position="26"/>
    </location>
</feature>
<feature type="chain" id="PRO_0000429490" description="Acidic skeletal organic matrix protein" evidence="1">
    <location>
        <begin position="27"/>
        <end position="359"/>
    </location>
</feature>
<feature type="region of interest" description="Disordered" evidence="2">
    <location>
        <begin position="60"/>
        <end position="83"/>
    </location>
</feature>
<feature type="region of interest" description="Disordered" evidence="2">
    <location>
        <begin position="224"/>
        <end position="254"/>
    </location>
</feature>
<feature type="coiled-coil region" evidence="1">
    <location>
        <begin position="66"/>
        <end position="89"/>
    </location>
</feature>
<protein>
    <recommendedName>
        <fullName evidence="4">Acidic skeletal organic matrix protein</fullName>
        <shortName evidence="4">Acidic SOMP</shortName>
    </recommendedName>
</protein>